<sequence length="242" mass="26708">MISDINALKYKKVLLKVSGEALMGDKQFGHEYDVIKKIAGDIKEVINLGVEVAIVVGGGNIYRGINASLVGMDRASADYIGMLATMINALTLQNVMESLNIYTRVLSAIPMMSVCEPYIRRKAKRHMEKKRVVIFAGGTGNPFCTTDSAAVLRAIEMNCDILLKATQVDGVYDSDPKKNPDAKKYFTISYKDVITNSLQVMDTAAIAVARENKLPIRVFSIKEQGNFARVIQDKGEYTTIEE</sequence>
<comment type="function">
    <text evidence="1">Catalyzes the reversible phosphorylation of UMP to UDP.</text>
</comment>
<comment type="catalytic activity">
    <reaction evidence="1">
        <text>UMP + ATP = UDP + ADP</text>
        <dbReference type="Rhea" id="RHEA:24400"/>
        <dbReference type="ChEBI" id="CHEBI:30616"/>
        <dbReference type="ChEBI" id="CHEBI:57865"/>
        <dbReference type="ChEBI" id="CHEBI:58223"/>
        <dbReference type="ChEBI" id="CHEBI:456216"/>
        <dbReference type="EC" id="2.7.4.22"/>
    </reaction>
</comment>
<comment type="activity regulation">
    <text evidence="1">Inhibited by UTP.</text>
</comment>
<comment type="pathway">
    <text evidence="1">Pyrimidine metabolism; CTP biosynthesis via de novo pathway; UDP from UMP (UMPK route): step 1/1.</text>
</comment>
<comment type="subunit">
    <text evidence="1">Homohexamer.</text>
</comment>
<comment type="subcellular location">
    <subcellularLocation>
        <location evidence="1">Cytoplasm</location>
    </subcellularLocation>
</comment>
<comment type="similarity">
    <text evidence="1">Belongs to the UMP kinase family.</text>
</comment>
<comment type="sequence caution" evidence="2">
    <conflict type="erroneous initiation">
        <sequence resource="EMBL-CDS" id="ABV84499"/>
    </conflict>
</comment>
<gene>
    <name evidence="1" type="primary">pyrH</name>
    <name type="ordered locus">RMA_0205</name>
</gene>
<evidence type="ECO:0000255" key="1">
    <source>
        <dbReference type="HAMAP-Rule" id="MF_01220"/>
    </source>
</evidence>
<evidence type="ECO:0000305" key="2"/>
<dbReference type="EC" id="2.7.4.22" evidence="1"/>
<dbReference type="EMBL" id="CP000683">
    <property type="protein sequence ID" value="ABV84499.1"/>
    <property type="status" value="ALT_INIT"/>
    <property type="molecule type" value="Genomic_DNA"/>
</dbReference>
<dbReference type="RefSeq" id="WP_041404512.1">
    <property type="nucleotide sequence ID" value="NC_009900.1"/>
</dbReference>
<dbReference type="SMR" id="A8F0R3"/>
<dbReference type="KEGG" id="rms:RMA_0205"/>
<dbReference type="HOGENOM" id="CLU_033861_0_0_5"/>
<dbReference type="UniPathway" id="UPA00159">
    <property type="reaction ID" value="UER00275"/>
</dbReference>
<dbReference type="Proteomes" id="UP000001311">
    <property type="component" value="Chromosome"/>
</dbReference>
<dbReference type="GO" id="GO:0005829">
    <property type="term" value="C:cytosol"/>
    <property type="evidence" value="ECO:0007669"/>
    <property type="project" value="TreeGrafter"/>
</dbReference>
<dbReference type="GO" id="GO:0005524">
    <property type="term" value="F:ATP binding"/>
    <property type="evidence" value="ECO:0007669"/>
    <property type="project" value="UniProtKB-KW"/>
</dbReference>
<dbReference type="GO" id="GO:0033862">
    <property type="term" value="F:UMP kinase activity"/>
    <property type="evidence" value="ECO:0007669"/>
    <property type="project" value="UniProtKB-EC"/>
</dbReference>
<dbReference type="GO" id="GO:0044210">
    <property type="term" value="P:'de novo' CTP biosynthetic process"/>
    <property type="evidence" value="ECO:0007669"/>
    <property type="project" value="UniProtKB-UniRule"/>
</dbReference>
<dbReference type="GO" id="GO:0006225">
    <property type="term" value="P:UDP biosynthetic process"/>
    <property type="evidence" value="ECO:0007669"/>
    <property type="project" value="TreeGrafter"/>
</dbReference>
<dbReference type="CDD" id="cd04254">
    <property type="entry name" value="AAK_UMPK-PyrH-Ec"/>
    <property type="match status" value="1"/>
</dbReference>
<dbReference type="FunFam" id="3.40.1160.10:FF:000001">
    <property type="entry name" value="Uridylate kinase"/>
    <property type="match status" value="1"/>
</dbReference>
<dbReference type="Gene3D" id="3.40.1160.10">
    <property type="entry name" value="Acetylglutamate kinase-like"/>
    <property type="match status" value="1"/>
</dbReference>
<dbReference type="HAMAP" id="MF_01220_B">
    <property type="entry name" value="PyrH_B"/>
    <property type="match status" value="1"/>
</dbReference>
<dbReference type="InterPro" id="IPR036393">
    <property type="entry name" value="AceGlu_kinase-like_sf"/>
</dbReference>
<dbReference type="InterPro" id="IPR001048">
    <property type="entry name" value="Asp/Glu/Uridylate_kinase"/>
</dbReference>
<dbReference type="InterPro" id="IPR011817">
    <property type="entry name" value="Uridylate_kinase"/>
</dbReference>
<dbReference type="InterPro" id="IPR015963">
    <property type="entry name" value="Uridylate_kinase_bac"/>
</dbReference>
<dbReference type="NCBIfam" id="TIGR02075">
    <property type="entry name" value="pyrH_bact"/>
    <property type="match status" value="1"/>
</dbReference>
<dbReference type="PANTHER" id="PTHR42833">
    <property type="entry name" value="URIDYLATE KINASE"/>
    <property type="match status" value="1"/>
</dbReference>
<dbReference type="PANTHER" id="PTHR42833:SF4">
    <property type="entry name" value="URIDYLATE KINASE PUMPKIN, CHLOROPLASTIC"/>
    <property type="match status" value="1"/>
</dbReference>
<dbReference type="Pfam" id="PF00696">
    <property type="entry name" value="AA_kinase"/>
    <property type="match status" value="1"/>
</dbReference>
<dbReference type="PIRSF" id="PIRSF005650">
    <property type="entry name" value="Uridylate_kin"/>
    <property type="match status" value="1"/>
</dbReference>
<dbReference type="SUPFAM" id="SSF53633">
    <property type="entry name" value="Carbamate kinase-like"/>
    <property type="match status" value="1"/>
</dbReference>
<keyword id="KW-0067">ATP-binding</keyword>
<keyword id="KW-0963">Cytoplasm</keyword>
<keyword id="KW-0418">Kinase</keyword>
<keyword id="KW-0547">Nucleotide-binding</keyword>
<keyword id="KW-0665">Pyrimidine biosynthesis</keyword>
<keyword id="KW-0808">Transferase</keyword>
<proteinExistence type="inferred from homology"/>
<organism>
    <name type="scientific">Rickettsia massiliae (strain Mtu5)</name>
    <dbReference type="NCBI Taxonomy" id="416276"/>
    <lineage>
        <taxon>Bacteria</taxon>
        <taxon>Pseudomonadati</taxon>
        <taxon>Pseudomonadota</taxon>
        <taxon>Alphaproteobacteria</taxon>
        <taxon>Rickettsiales</taxon>
        <taxon>Rickettsiaceae</taxon>
        <taxon>Rickettsieae</taxon>
        <taxon>Rickettsia</taxon>
        <taxon>spotted fever group</taxon>
    </lineage>
</organism>
<reference key="1">
    <citation type="journal article" date="2007" name="Genome Res.">
        <title>Lateral gene transfer between obligate intracellular bacteria: evidence from the Rickettsia massiliae genome.</title>
        <authorList>
            <person name="Blanc G."/>
            <person name="Ogata H."/>
            <person name="Robert C."/>
            <person name="Audic S."/>
            <person name="Claverie J.-M."/>
            <person name="Raoult D."/>
        </authorList>
    </citation>
    <scope>NUCLEOTIDE SEQUENCE [LARGE SCALE GENOMIC DNA]</scope>
    <source>
        <strain>Mtu5</strain>
    </source>
</reference>
<accession>A8F0R3</accession>
<name>PYRH_RICM5</name>
<protein>
    <recommendedName>
        <fullName evidence="1">Uridylate kinase</fullName>
        <shortName evidence="1">UK</shortName>
        <ecNumber evidence="1">2.7.4.22</ecNumber>
    </recommendedName>
    <alternativeName>
        <fullName evidence="1">Uridine monophosphate kinase</fullName>
        <shortName evidence="1">UMP kinase</shortName>
        <shortName evidence="1">UMPK</shortName>
    </alternativeName>
</protein>
<feature type="chain" id="PRO_0000323944" description="Uridylate kinase">
    <location>
        <begin position="1"/>
        <end position="242"/>
    </location>
</feature>
<feature type="binding site" evidence="1">
    <location>
        <begin position="16"/>
        <end position="19"/>
    </location>
    <ligand>
        <name>ATP</name>
        <dbReference type="ChEBI" id="CHEBI:30616"/>
    </ligand>
</feature>
<feature type="binding site" evidence="1">
    <location>
        <position position="58"/>
    </location>
    <ligand>
        <name>UMP</name>
        <dbReference type="ChEBI" id="CHEBI:57865"/>
    </ligand>
</feature>
<feature type="binding site" evidence="1">
    <location>
        <position position="59"/>
    </location>
    <ligand>
        <name>ATP</name>
        <dbReference type="ChEBI" id="CHEBI:30616"/>
    </ligand>
</feature>
<feature type="binding site" evidence="1">
    <location>
        <position position="63"/>
    </location>
    <ligand>
        <name>ATP</name>
        <dbReference type="ChEBI" id="CHEBI:30616"/>
    </ligand>
</feature>
<feature type="binding site" evidence="1">
    <location>
        <position position="78"/>
    </location>
    <ligand>
        <name>UMP</name>
        <dbReference type="ChEBI" id="CHEBI:57865"/>
    </ligand>
</feature>
<feature type="binding site" evidence="1">
    <location>
        <begin position="139"/>
        <end position="146"/>
    </location>
    <ligand>
        <name>UMP</name>
        <dbReference type="ChEBI" id="CHEBI:57865"/>
    </ligand>
</feature>
<feature type="binding site" evidence="1">
    <location>
        <position position="166"/>
    </location>
    <ligand>
        <name>ATP</name>
        <dbReference type="ChEBI" id="CHEBI:30616"/>
    </ligand>
</feature>
<feature type="binding site" evidence="1">
    <location>
        <position position="167"/>
    </location>
    <ligand>
        <name>ATP</name>
        <dbReference type="ChEBI" id="CHEBI:30616"/>
    </ligand>
</feature>
<feature type="binding site" evidence="1">
    <location>
        <position position="172"/>
    </location>
    <ligand>
        <name>ATP</name>
        <dbReference type="ChEBI" id="CHEBI:30616"/>
    </ligand>
</feature>
<feature type="binding site" evidence="1">
    <location>
        <position position="175"/>
    </location>
    <ligand>
        <name>ATP</name>
        <dbReference type="ChEBI" id="CHEBI:30616"/>
    </ligand>
</feature>